<accession>P07260</accession>
<accession>D6W1T0</accession>
<proteinExistence type="evidence at protein level"/>
<keyword id="KW-0002">3D-structure</keyword>
<keyword id="KW-0963">Cytoplasm</keyword>
<keyword id="KW-0396">Initiation factor</keyword>
<keyword id="KW-1017">Isopeptide bond</keyword>
<keyword id="KW-0539">Nucleus</keyword>
<keyword id="KW-0597">Phosphoprotein</keyword>
<keyword id="KW-0648">Protein biosynthesis</keyword>
<keyword id="KW-1185">Reference proteome</keyword>
<keyword id="KW-0694">RNA-binding</keyword>
<keyword id="KW-0810">Translation regulation</keyword>
<keyword id="KW-0832">Ubl conjugation</keyword>
<name>IF4E_YEAST</name>
<feature type="chain" id="PRO_0000193653" description="Eukaryotic translation initiation factor 4E">
    <location>
        <begin position="1"/>
        <end position="213"/>
    </location>
</feature>
<feature type="modified residue" description="Phosphoserine; by CK2" evidence="5">
    <location>
        <position position="2"/>
    </location>
</feature>
<feature type="modified residue" description="Phosphoserine; by CK2" evidence="5 8 9 10 11 12">
    <location>
        <position position="15"/>
    </location>
</feature>
<feature type="modified residue" description="Phosphothreonine" evidence="10 11 12">
    <location>
        <position position="22"/>
    </location>
</feature>
<feature type="modified residue" description="Phosphoserine" evidence="12">
    <location>
        <position position="28"/>
    </location>
</feature>
<feature type="modified residue" description="Phosphoserine" evidence="10 11 12">
    <location>
        <position position="30"/>
    </location>
</feature>
<feature type="cross-link" description="Glycyl lysine isopeptide (Lys-Gly) (interchain with G-Cter in ubiquitin)" evidence="13">
    <location>
        <position position="114"/>
    </location>
</feature>
<feature type="strand" evidence="15">
    <location>
        <begin position="9"/>
        <end position="12"/>
    </location>
</feature>
<feature type="strand" evidence="14">
    <location>
        <begin position="15"/>
        <end position="17"/>
    </location>
</feature>
<feature type="strand" evidence="16">
    <location>
        <begin position="26"/>
        <end position="28"/>
    </location>
</feature>
<feature type="strand" evidence="16">
    <location>
        <begin position="38"/>
        <end position="48"/>
    </location>
</feature>
<feature type="strand" evidence="16">
    <location>
        <begin position="52"/>
        <end position="55"/>
    </location>
</feature>
<feature type="helix" evidence="16">
    <location>
        <begin position="58"/>
        <end position="61"/>
    </location>
</feature>
<feature type="strand" evidence="16">
    <location>
        <begin position="62"/>
        <end position="70"/>
    </location>
</feature>
<feature type="helix" evidence="16">
    <location>
        <begin position="71"/>
        <end position="78"/>
    </location>
</feature>
<feature type="helix" evidence="16">
    <location>
        <begin position="84"/>
        <end position="86"/>
    </location>
</feature>
<feature type="strand" evidence="16">
    <location>
        <begin position="92"/>
        <end position="97"/>
    </location>
</feature>
<feature type="turn" evidence="15">
    <location>
        <begin position="104"/>
        <end position="106"/>
    </location>
</feature>
<feature type="turn" evidence="16">
    <location>
        <begin position="107"/>
        <end position="111"/>
    </location>
</feature>
<feature type="strand" evidence="16">
    <location>
        <begin position="113"/>
        <end position="119"/>
    </location>
</feature>
<feature type="helix" evidence="17">
    <location>
        <begin position="120"/>
        <end position="125"/>
    </location>
</feature>
<feature type="helix" evidence="16">
    <location>
        <begin position="126"/>
        <end position="138"/>
    </location>
</feature>
<feature type="strand" evidence="16">
    <location>
        <begin position="141"/>
        <end position="143"/>
    </location>
</feature>
<feature type="turn" evidence="14">
    <location>
        <begin position="146"/>
        <end position="148"/>
    </location>
</feature>
<feature type="strand" evidence="16">
    <location>
        <begin position="149"/>
        <end position="155"/>
    </location>
</feature>
<feature type="strand" evidence="16">
    <location>
        <begin position="161"/>
        <end position="168"/>
    </location>
</feature>
<feature type="helix" evidence="16">
    <location>
        <begin position="172"/>
        <end position="185"/>
    </location>
</feature>
<feature type="strand" evidence="16">
    <location>
        <begin position="190"/>
        <end position="192"/>
    </location>
</feature>
<feature type="strand" evidence="16">
    <location>
        <begin position="194"/>
        <end position="198"/>
    </location>
</feature>
<feature type="helix" evidence="17">
    <location>
        <begin position="199"/>
        <end position="203"/>
    </location>
</feature>
<feature type="strand" evidence="16">
    <location>
        <begin position="210"/>
        <end position="213"/>
    </location>
</feature>
<reference key="1">
    <citation type="journal article" date="1987" name="Mol. Cell. Biol.">
        <title>mRNA cap-binding protein: cloning of the gene encoding protein synthesis initiation factor eIF-4E from Saccharomyces cerevisiae.</title>
        <authorList>
            <person name="Altmann M."/>
            <person name="Handschin C."/>
            <person name="Trachsel H."/>
        </authorList>
    </citation>
    <scope>NUCLEOTIDE SEQUENCE [GENOMIC DNA]</scope>
</reference>
<reference key="2">
    <citation type="journal article" date="1988" name="Mol. Cell. Biol.">
        <title>CDC33 encodes mRNA cap-binding protein eIF-4E of Saccharomyces cerevisiae.</title>
        <authorList>
            <person name="Brenner C."/>
            <person name="Nakayama N."/>
            <person name="Goebl M."/>
            <person name="Tanaka K."/>
            <person name="Toh-e A."/>
            <person name="Matsumoto K."/>
        </authorList>
    </citation>
    <scope>NUCLEOTIDE SEQUENCE [GENOMIC DNA]</scope>
</reference>
<reference key="3">
    <citation type="journal article" date="1989" name="Mol. Cell. Biol.">
        <title>Translation in Saccharomyces cerevisiae: initiation factor 4E-dependent cell-free system.</title>
        <authorList>
            <person name="Altmann M."/>
            <person name="Sonenberg N."/>
            <person name="Trachsel H."/>
        </authorList>
    </citation>
    <scope>NUCLEOTIDE SEQUENCE [GENOMIC DNA]</scope>
    <scope>FUNCTION</scope>
</reference>
<reference key="4">
    <citation type="journal article" date="1995" name="Yeast">
        <title>Sequence analysis of a 9873 bp fragment of the left arm of yeast chromosome XV that contains the ARG8 and CDC33 genes, a putative riboflavin synthase beta chain gene, and four new open reading frames.</title>
        <authorList>
            <person name="Casas C."/>
            <person name="Aldea M."/>
            <person name="Casamayor A."/>
            <person name="Lafuente M.J."/>
            <person name="Gamo F.J."/>
            <person name="Gancedo C."/>
            <person name="Arino J."/>
            <person name="Herrero E."/>
        </authorList>
    </citation>
    <scope>NUCLEOTIDE SEQUENCE [GENOMIC DNA]</scope>
    <source>
        <strain>ATCC 96604 / S288c / FY1679</strain>
    </source>
</reference>
<reference key="5">
    <citation type="journal article" date="1997" name="Nature">
        <title>The nucleotide sequence of Saccharomyces cerevisiae chromosome XV.</title>
        <authorList>
            <person name="Dujon B."/>
            <person name="Albermann K."/>
            <person name="Aldea M."/>
            <person name="Alexandraki D."/>
            <person name="Ansorge W."/>
            <person name="Arino J."/>
            <person name="Benes V."/>
            <person name="Bohn C."/>
            <person name="Bolotin-Fukuhara M."/>
            <person name="Bordonne R."/>
            <person name="Boyer J."/>
            <person name="Camasses A."/>
            <person name="Casamayor A."/>
            <person name="Casas C."/>
            <person name="Cheret G."/>
            <person name="Cziepluch C."/>
            <person name="Daignan-Fornier B."/>
            <person name="Dang V.-D."/>
            <person name="de Haan M."/>
            <person name="Delius H."/>
            <person name="Durand P."/>
            <person name="Fairhead C."/>
            <person name="Feldmann H."/>
            <person name="Gaillon L."/>
            <person name="Galisson F."/>
            <person name="Gamo F.-J."/>
            <person name="Gancedo C."/>
            <person name="Goffeau A."/>
            <person name="Goulding S.E."/>
            <person name="Grivell L.A."/>
            <person name="Habbig B."/>
            <person name="Hand N.J."/>
            <person name="Hani J."/>
            <person name="Hattenhorst U."/>
            <person name="Hebling U."/>
            <person name="Hernando Y."/>
            <person name="Herrero E."/>
            <person name="Heumann K."/>
            <person name="Hiesel R."/>
            <person name="Hilger F."/>
            <person name="Hofmann B."/>
            <person name="Hollenberg C.P."/>
            <person name="Hughes B."/>
            <person name="Jauniaux J.-C."/>
            <person name="Kalogeropoulos A."/>
            <person name="Katsoulou C."/>
            <person name="Kordes E."/>
            <person name="Lafuente M.J."/>
            <person name="Landt O."/>
            <person name="Louis E.J."/>
            <person name="Maarse A.C."/>
            <person name="Madania A."/>
            <person name="Mannhaupt G."/>
            <person name="Marck C."/>
            <person name="Martin R.P."/>
            <person name="Mewes H.-W."/>
            <person name="Michaux G."/>
            <person name="Paces V."/>
            <person name="Parle-McDermott A.G."/>
            <person name="Pearson B.M."/>
            <person name="Perrin A."/>
            <person name="Pettersson B."/>
            <person name="Poch O."/>
            <person name="Pohl T.M."/>
            <person name="Poirey R."/>
            <person name="Portetelle D."/>
            <person name="Pujol A."/>
            <person name="Purnelle B."/>
            <person name="Ramezani Rad M."/>
            <person name="Rechmann S."/>
            <person name="Schwager C."/>
            <person name="Schweizer M."/>
            <person name="Sor F."/>
            <person name="Sterky F."/>
            <person name="Tarassov I.A."/>
            <person name="Teodoru C."/>
            <person name="Tettelin H."/>
            <person name="Thierry A."/>
            <person name="Tobiasch E."/>
            <person name="Tzermia M."/>
            <person name="Uhlen M."/>
            <person name="Unseld M."/>
            <person name="Valens M."/>
            <person name="Vandenbol M."/>
            <person name="Vetter I."/>
            <person name="Vlcek C."/>
            <person name="Voet M."/>
            <person name="Volckaert G."/>
            <person name="Voss H."/>
            <person name="Wambutt R."/>
            <person name="Wedler H."/>
            <person name="Wiemann S."/>
            <person name="Winsor B."/>
            <person name="Wolfe K.H."/>
            <person name="Zollner A."/>
            <person name="Zumstein E."/>
            <person name="Kleine K."/>
        </authorList>
    </citation>
    <scope>NUCLEOTIDE SEQUENCE [LARGE SCALE GENOMIC DNA]</scope>
    <source>
        <strain>ATCC 204508 / S288c</strain>
    </source>
</reference>
<reference key="6">
    <citation type="journal article" date="2014" name="G3 (Bethesda)">
        <title>The reference genome sequence of Saccharomyces cerevisiae: Then and now.</title>
        <authorList>
            <person name="Engel S.R."/>
            <person name="Dietrich F.S."/>
            <person name="Fisk D.G."/>
            <person name="Binkley G."/>
            <person name="Balakrishnan R."/>
            <person name="Costanzo M.C."/>
            <person name="Dwight S.S."/>
            <person name="Hitz B.C."/>
            <person name="Karra K."/>
            <person name="Nash R.S."/>
            <person name="Weng S."/>
            <person name="Wong E.D."/>
            <person name="Lloyd P."/>
            <person name="Skrzypek M.S."/>
            <person name="Miyasato S.R."/>
            <person name="Simison M."/>
            <person name="Cherry J.M."/>
        </authorList>
    </citation>
    <scope>GENOME REANNOTATION</scope>
    <source>
        <strain>ATCC 204508 / S288c</strain>
    </source>
</reference>
<reference key="7">
    <citation type="journal article" date="2007" name="Genome Res.">
        <title>Approaching a complete repository of sequence-verified protein-encoding clones for Saccharomyces cerevisiae.</title>
        <authorList>
            <person name="Hu Y."/>
            <person name="Rolfs A."/>
            <person name="Bhullar B."/>
            <person name="Murthy T.V.S."/>
            <person name="Zhu C."/>
            <person name="Berger M.F."/>
            <person name="Camargo A.A."/>
            <person name="Kelley F."/>
            <person name="McCarron S."/>
            <person name="Jepson D."/>
            <person name="Richardson A."/>
            <person name="Raphael J."/>
            <person name="Moreira D."/>
            <person name="Taycher E."/>
            <person name="Zuo D."/>
            <person name="Mohr S."/>
            <person name="Kane M.F."/>
            <person name="Williamson J."/>
            <person name="Simpson A.J.G."/>
            <person name="Bulyk M.L."/>
            <person name="Harlow E."/>
            <person name="Marsischky G."/>
            <person name="Kolodner R.D."/>
            <person name="LaBaer J."/>
        </authorList>
    </citation>
    <scope>NUCLEOTIDE SEQUENCE [GENOMIC DNA]</scope>
    <source>
        <strain>ATCC 204508 / S288c</strain>
    </source>
</reference>
<reference key="8">
    <citation type="journal article" date="1994" name="J. Biol. Chem.">
        <title>Initiation factor eIF-4E of Saccharomyces cerevisiae. Distribution within the cell, binding to mRNA, and consequences of its overproduction.</title>
        <authorList>
            <person name="Lang V."/>
            <person name="Zanchin N.I."/>
            <person name="Luensdorf H."/>
            <person name="Tuite M."/>
            <person name="McCarthy J.E."/>
        </authorList>
    </citation>
    <scope>FUNCTION</scope>
    <scope>SUBCELLULAR LOCATION</scope>
</reference>
<reference key="9">
    <citation type="journal article" date="1995" name="J. Biol. Chem.">
        <title>Characterization of the in vivo phosphorylation sites of the mRNA.cap-binding complex proteins eukaryotic initiation factor-4E and p20 in Saccharomyces cerevisiae.</title>
        <authorList>
            <person name="Zanchin N.I.T."/>
            <person name="McCarthy J.E.G."/>
        </authorList>
    </citation>
    <scope>PHOSPHORYLATION AT SER-2 AND SER-15</scope>
</reference>
<reference key="10">
    <citation type="journal article" date="2001" name="Mol. Cell">
        <title>Targeting an mRNA for decapping: displacement of translation factors and association of the Lsm1p-7p complex on deadenylated yeast mRNAs.</title>
        <authorList>
            <person name="Tharun S."/>
            <person name="Parker R."/>
        </authorList>
    </citation>
    <scope>INTERACTION WITH PAT1</scope>
</reference>
<reference key="11">
    <citation type="journal article" date="2003" name="Nature">
        <title>Global analysis of protein expression in yeast.</title>
        <authorList>
            <person name="Ghaemmaghami S."/>
            <person name="Huh W.-K."/>
            <person name="Bower K."/>
            <person name="Howson R.W."/>
            <person name="Belle A."/>
            <person name="Dephoure N."/>
            <person name="O'Shea E.K."/>
            <person name="Weissman J.S."/>
        </authorList>
    </citation>
    <scope>LEVEL OF PROTEIN EXPRESSION [LARGE SCALE ANALYSIS]</scope>
</reference>
<reference key="12">
    <citation type="journal article" date="2005" name="Mol. Cell. Proteomics">
        <title>Quantitative phosphoproteomics applied to the yeast pheromone signaling pathway.</title>
        <authorList>
            <person name="Gruhler A."/>
            <person name="Olsen J.V."/>
            <person name="Mohammed S."/>
            <person name="Mortensen P."/>
            <person name="Faergeman N.J."/>
            <person name="Mann M."/>
            <person name="Jensen O.N."/>
        </authorList>
    </citation>
    <scope>PHOSPHORYLATION [LARGE SCALE ANALYSIS] AT SER-15</scope>
    <scope>IDENTIFICATION BY MASS SPECTROMETRY [LARGE SCALE ANALYSIS]</scope>
    <source>
        <strain>YAL6B</strain>
    </source>
</reference>
<reference key="13">
    <citation type="journal article" date="2007" name="J. Proteome Res.">
        <title>Large-scale phosphorylation analysis of alpha-factor-arrested Saccharomyces cerevisiae.</title>
        <authorList>
            <person name="Li X."/>
            <person name="Gerber S.A."/>
            <person name="Rudner A.D."/>
            <person name="Beausoleil S.A."/>
            <person name="Haas W."/>
            <person name="Villen J."/>
            <person name="Elias J.E."/>
            <person name="Gygi S.P."/>
        </authorList>
    </citation>
    <scope>PHOSPHORYLATION [LARGE SCALE ANALYSIS] AT SER-15; THR-22 AND SER-30</scope>
    <scope>IDENTIFICATION BY MASS SPECTROMETRY [LARGE SCALE ANALYSIS]</scope>
    <source>
        <strain>ADR376</strain>
    </source>
</reference>
<reference key="14">
    <citation type="journal article" date="2007" name="Proc. Natl. Acad. Sci. U.S.A.">
        <title>Analysis of phosphorylation sites on proteins from Saccharomyces cerevisiae by electron transfer dissociation (ETD) mass spectrometry.</title>
        <authorList>
            <person name="Chi A."/>
            <person name="Huttenhower C."/>
            <person name="Geer L.Y."/>
            <person name="Coon J.J."/>
            <person name="Syka J.E.P."/>
            <person name="Bai D.L."/>
            <person name="Shabanowitz J."/>
            <person name="Burke D.J."/>
            <person name="Troyanskaya O.G."/>
            <person name="Hunt D.F."/>
        </authorList>
    </citation>
    <scope>PHOSPHORYLATION [LARGE SCALE ANALYSIS] AT SER-15</scope>
    <scope>IDENTIFICATION BY MASS SPECTROMETRY [LARGE SCALE ANALYSIS]</scope>
</reference>
<reference key="15">
    <citation type="journal article" date="2008" name="Mol. Cell. Proteomics">
        <title>A multidimensional chromatography technology for in-depth phosphoproteome analysis.</title>
        <authorList>
            <person name="Albuquerque C.P."/>
            <person name="Smolka M.B."/>
            <person name="Payne S.H."/>
            <person name="Bafna V."/>
            <person name="Eng J."/>
            <person name="Zhou H."/>
        </authorList>
    </citation>
    <scope>PHOSPHORYLATION [LARGE SCALE ANALYSIS] AT SER-15; THR-22 AND SER-30</scope>
    <scope>IDENTIFICATION BY MASS SPECTROMETRY [LARGE SCALE ANALYSIS]</scope>
</reference>
<reference key="16">
    <citation type="journal article" date="2009" name="Science">
        <title>Global analysis of Cdk1 substrate phosphorylation sites provides insights into evolution.</title>
        <authorList>
            <person name="Holt L.J."/>
            <person name="Tuch B.B."/>
            <person name="Villen J."/>
            <person name="Johnson A.D."/>
            <person name="Gygi S.P."/>
            <person name="Morgan D.O."/>
        </authorList>
    </citation>
    <scope>PHOSPHORYLATION [LARGE SCALE ANALYSIS] AT SER-15; THR-22; SER-28 AND SER-30</scope>
    <scope>IDENTIFICATION BY MASS SPECTROMETRY [LARGE SCALE ANALYSIS]</scope>
</reference>
<reference key="17">
    <citation type="journal article" date="2012" name="Proteomics">
        <title>Sites of ubiquitin attachment in Saccharomyces cerevisiae.</title>
        <authorList>
            <person name="Starita L.M."/>
            <person name="Lo R.S."/>
            <person name="Eng J.K."/>
            <person name="von Haller P.D."/>
            <person name="Fields S."/>
        </authorList>
    </citation>
    <scope>UBIQUITINATION [LARGE SCALE ANALYSIS] AT LYS-114</scope>
    <scope>IDENTIFICATION BY MASS SPECTROMETRY [LARGE SCALE ANALYSIS]</scope>
</reference>
<reference key="18">
    <citation type="journal article" date="1997" name="Nat. Struct. Biol.">
        <title>Structure of translation factor eIF4E bound to m7GDP and interaction with 4E-binding protein.</title>
        <authorList>
            <person name="Matsuo H."/>
            <person name="Li H."/>
            <person name="McGuire A.M."/>
            <person name="Fletcher C.M."/>
            <person name="Gingras A.-C."/>
            <person name="Sonenberg N."/>
            <person name="Wagner G."/>
        </authorList>
    </citation>
    <scope>STRUCTURE BY NMR</scope>
</reference>
<comment type="function">
    <text evidence="4 6">Recognizes and binds the 7-methylguanosine (m7G)-containing mRNA cap during an early step in the initiation of protein synthesis and facilitates ribosome binding by inducing the unwinding of the mRNAs secondary structures.</text>
</comment>
<comment type="subunit">
    <text evidence="1 2">Component of the eIF4F complex, which composition varies with external and internal environmental conditions. It is composed of at least eIF4A (TIF1/TIF2), eIF4E (TIF45) and eIF4G (TIF4631 or TIF4632) (By similarity). Interacts with PAT1 in a RNA-dependent manner. eIF4E is also known to interact with other partners.</text>
</comment>
<comment type="interaction">
    <interactant intactId="EBI-150">
        <id>P07260</id>
    </interactant>
    <interactant intactId="EBI-9010">
        <id>P12962</id>
        <label>CAF20</label>
    </interactant>
    <organismsDiffer>false</organismsDiffer>
    <experiments>8</experiments>
</comment>
<comment type="interaction">
    <interactant intactId="EBI-150">
        <id>P07260</id>
    </interactant>
    <interactant intactId="EBI-9002">
        <id>P39935</id>
        <label>TIF4631</label>
    </interactant>
    <organismsDiffer>false</organismsDiffer>
    <experiments>15</experiments>
</comment>
<comment type="subcellular location">
    <subcellularLocation>
        <location evidence="6">Cytoplasm</location>
    </subcellularLocation>
    <subcellularLocation>
        <location evidence="6">Nucleus</location>
    </subcellularLocation>
</comment>
<comment type="miscellaneous">
    <text evidence="3">Present with 14200 molecules/cell in log phase SD medium.</text>
</comment>
<comment type="similarity">
    <text evidence="7">Belongs to the eukaryotic initiation factor 4E family.</text>
</comment>
<sequence>MSVEEVSKKFEENVSVDDTTATPKTVLSDSAHFDVKHPLNTKWTLWYTKPAVDKSESWSDLLRPVTSFQTVEEFWAIIQNIPEPHELPLKSDYHVFRNDVRPEWEDEANAKGGKWSFQLRGKGADIDELWLRTLLAVIGETIDEDDSQINGVVLSIRKGGNKFALWTKSEDKEPLLRIGGKFKQVLKLTDDGHLEFFPHSSANGRHPQPSITL</sequence>
<protein>
    <recommendedName>
        <fullName>Eukaryotic translation initiation factor 4E</fullName>
        <shortName>eIF-4E</shortName>
        <shortName>eIF4E</shortName>
    </recommendedName>
    <alternativeName>
        <fullName>eIF-4F 25 kDa subunit</fullName>
    </alternativeName>
    <alternativeName>
        <fullName>mRNA cap-binding protein</fullName>
    </alternativeName>
</protein>
<evidence type="ECO:0000250" key="1"/>
<evidence type="ECO:0000269" key="2">
    <source>
    </source>
</evidence>
<evidence type="ECO:0000269" key="3">
    <source>
    </source>
</evidence>
<evidence type="ECO:0000269" key="4">
    <source>
    </source>
</evidence>
<evidence type="ECO:0000269" key="5">
    <source>
    </source>
</evidence>
<evidence type="ECO:0000269" key="6">
    <source>
    </source>
</evidence>
<evidence type="ECO:0000305" key="7"/>
<evidence type="ECO:0007744" key="8">
    <source>
    </source>
</evidence>
<evidence type="ECO:0007744" key="9">
    <source>
    </source>
</evidence>
<evidence type="ECO:0007744" key="10">
    <source>
    </source>
</evidence>
<evidence type="ECO:0007744" key="11">
    <source>
    </source>
</evidence>
<evidence type="ECO:0007744" key="12">
    <source>
    </source>
</evidence>
<evidence type="ECO:0007744" key="13">
    <source>
    </source>
</evidence>
<evidence type="ECO:0007829" key="14">
    <source>
        <dbReference type="PDB" id="1AP8"/>
    </source>
</evidence>
<evidence type="ECO:0007829" key="15">
    <source>
        <dbReference type="PDB" id="1RF8"/>
    </source>
</evidence>
<evidence type="ECO:0007829" key="16">
    <source>
        <dbReference type="PDB" id="6FC1"/>
    </source>
</evidence>
<evidence type="ECO:0007829" key="17">
    <source>
        <dbReference type="PDB" id="6FC3"/>
    </source>
</evidence>
<organism>
    <name type="scientific">Saccharomyces cerevisiae (strain ATCC 204508 / S288c)</name>
    <name type="common">Baker's yeast</name>
    <dbReference type="NCBI Taxonomy" id="559292"/>
    <lineage>
        <taxon>Eukaryota</taxon>
        <taxon>Fungi</taxon>
        <taxon>Dikarya</taxon>
        <taxon>Ascomycota</taxon>
        <taxon>Saccharomycotina</taxon>
        <taxon>Saccharomycetes</taxon>
        <taxon>Saccharomycetales</taxon>
        <taxon>Saccharomycetaceae</taxon>
        <taxon>Saccharomyces</taxon>
    </lineage>
</organism>
<dbReference type="EMBL" id="M15436">
    <property type="protein sequence ID" value="AAA34587.1"/>
    <property type="molecule type" value="Genomic_DNA"/>
</dbReference>
<dbReference type="EMBL" id="M21620">
    <property type="protein sequence ID" value="AAA34480.1"/>
    <property type="molecule type" value="Genomic_DNA"/>
</dbReference>
<dbReference type="EMBL" id="M29251">
    <property type="protein sequence ID" value="AAA34588.1"/>
    <property type="molecule type" value="Genomic_DNA"/>
</dbReference>
<dbReference type="EMBL" id="X84036">
    <property type="protein sequence ID" value="CAA58854.1"/>
    <property type="molecule type" value="Genomic_DNA"/>
</dbReference>
<dbReference type="EMBL" id="Z74881">
    <property type="protein sequence ID" value="CAA99160.1"/>
    <property type="molecule type" value="Genomic_DNA"/>
</dbReference>
<dbReference type="EMBL" id="AY692936">
    <property type="protein sequence ID" value="AAT92955.1"/>
    <property type="molecule type" value="Genomic_DNA"/>
</dbReference>
<dbReference type="EMBL" id="BK006948">
    <property type="protein sequence ID" value="DAA10646.1"/>
    <property type="molecule type" value="Genomic_DNA"/>
</dbReference>
<dbReference type="PIR" id="A26130">
    <property type="entry name" value="A26130"/>
</dbReference>
<dbReference type="RefSeq" id="NP_014502.1">
    <property type="nucleotide sequence ID" value="NM_001183393.1"/>
</dbReference>
<dbReference type="PDB" id="1AP8">
    <property type="method" value="NMR"/>
    <property type="chains" value="A=1-213"/>
</dbReference>
<dbReference type="PDB" id="1RF8">
    <property type="method" value="NMR"/>
    <property type="chains" value="A=1-213"/>
</dbReference>
<dbReference type="PDB" id="6FC1">
    <property type="method" value="X-ray"/>
    <property type="resolution" value="1.35 A"/>
    <property type="chains" value="A/C=25-213"/>
</dbReference>
<dbReference type="PDB" id="6FC2">
    <property type="method" value="X-ray"/>
    <property type="resolution" value="1.92 A"/>
    <property type="chains" value="A/C=35-213"/>
</dbReference>
<dbReference type="PDB" id="6FC3">
    <property type="method" value="X-ray"/>
    <property type="resolution" value="1.75 A"/>
    <property type="chains" value="A=35-213"/>
</dbReference>
<dbReference type="PDBsum" id="1AP8"/>
<dbReference type="PDBsum" id="1RF8"/>
<dbReference type="PDBsum" id="6FC1"/>
<dbReference type="PDBsum" id="6FC2"/>
<dbReference type="PDBsum" id="6FC3"/>
<dbReference type="SMR" id="P07260"/>
<dbReference type="BioGRID" id="34278">
    <property type="interactions" value="187"/>
</dbReference>
<dbReference type="ComplexPortal" id="CPX-430">
    <property type="entry name" value="Eukaryotic translation initiation factor 4F complex, variant TIF4631"/>
</dbReference>
<dbReference type="ComplexPortal" id="CPX-431">
    <property type="entry name" value="Eukaryotic translation initiation factor 4F complex, variant TIF4632"/>
</dbReference>
<dbReference type="DIP" id="DIP-1223N"/>
<dbReference type="ELM" id="P07260"/>
<dbReference type="FunCoup" id="P07260">
    <property type="interactions" value="1627"/>
</dbReference>
<dbReference type="IntAct" id="P07260">
    <property type="interactions" value="91"/>
</dbReference>
<dbReference type="MINT" id="P07260"/>
<dbReference type="STRING" id="4932.YOL139C"/>
<dbReference type="iPTMnet" id="P07260"/>
<dbReference type="PaxDb" id="4932-YOL139C"/>
<dbReference type="PeptideAtlas" id="P07260"/>
<dbReference type="TopDownProteomics" id="P07260"/>
<dbReference type="EnsemblFungi" id="YOL139C_mRNA">
    <property type="protein sequence ID" value="YOL139C"/>
    <property type="gene ID" value="YOL139C"/>
</dbReference>
<dbReference type="GeneID" id="854026"/>
<dbReference type="KEGG" id="sce:YOL139C"/>
<dbReference type="AGR" id="SGD:S000005499"/>
<dbReference type="SGD" id="S000005499">
    <property type="gene designation" value="CDC33"/>
</dbReference>
<dbReference type="VEuPathDB" id="FungiDB:YOL139C"/>
<dbReference type="eggNOG" id="KOG1670">
    <property type="taxonomic scope" value="Eukaryota"/>
</dbReference>
<dbReference type="GeneTree" id="ENSGT00940000167792"/>
<dbReference type="HOGENOM" id="CLU_043552_2_2_1"/>
<dbReference type="InParanoid" id="P07260"/>
<dbReference type="OMA" id="EEFWAIV"/>
<dbReference type="OrthoDB" id="590761at2759"/>
<dbReference type="BioCyc" id="YEAST:G3O-33532-MONOMER"/>
<dbReference type="Reactome" id="R-SCE-156827">
    <property type="pathway name" value="L13a-mediated translational silencing of Ceruloplasmin expression"/>
</dbReference>
<dbReference type="Reactome" id="R-SCE-429947">
    <property type="pathway name" value="Deadenylation of mRNA"/>
</dbReference>
<dbReference type="Reactome" id="R-SCE-72649">
    <property type="pathway name" value="Translation initiation complex formation"/>
</dbReference>
<dbReference type="Reactome" id="R-SCE-72662">
    <property type="pathway name" value="Activation of the mRNA upon binding of the cap-binding complex and eIFs, and subsequent binding to 43S"/>
</dbReference>
<dbReference type="Reactome" id="R-SCE-72702">
    <property type="pathway name" value="Ribosomal scanning and start codon recognition"/>
</dbReference>
<dbReference type="BioGRID-ORCS" id="854026">
    <property type="hits" value="10 hits in 10 CRISPR screens"/>
</dbReference>
<dbReference type="CD-CODE" id="A777E0F8">
    <property type="entry name" value="P-body"/>
</dbReference>
<dbReference type="CD-CODE" id="E03F929F">
    <property type="entry name" value="Stress granule"/>
</dbReference>
<dbReference type="EvolutionaryTrace" id="P07260"/>
<dbReference type="PRO" id="PR:P07260"/>
<dbReference type="Proteomes" id="UP000002311">
    <property type="component" value="Chromosome XV"/>
</dbReference>
<dbReference type="RNAct" id="P07260">
    <property type="molecule type" value="protein"/>
</dbReference>
<dbReference type="GO" id="GO:0005737">
    <property type="term" value="C:cytoplasm"/>
    <property type="evidence" value="ECO:0000314"/>
    <property type="project" value="SGD"/>
</dbReference>
<dbReference type="GO" id="GO:0010494">
    <property type="term" value="C:cytoplasmic stress granule"/>
    <property type="evidence" value="ECO:0000314"/>
    <property type="project" value="SGD"/>
</dbReference>
<dbReference type="GO" id="GO:0016281">
    <property type="term" value="C:eukaryotic translation initiation factor 4F complex"/>
    <property type="evidence" value="ECO:0000314"/>
    <property type="project" value="SGD"/>
</dbReference>
<dbReference type="GO" id="GO:0005634">
    <property type="term" value="C:nucleus"/>
    <property type="evidence" value="ECO:0000314"/>
    <property type="project" value="SGD"/>
</dbReference>
<dbReference type="GO" id="GO:0005840">
    <property type="term" value="C:ribosome"/>
    <property type="evidence" value="ECO:0000303"/>
    <property type="project" value="ComplexPortal"/>
</dbReference>
<dbReference type="GO" id="GO:0098808">
    <property type="term" value="F:mRNA cap binding"/>
    <property type="evidence" value="ECO:0000314"/>
    <property type="project" value="SGD"/>
</dbReference>
<dbReference type="GO" id="GO:0032266">
    <property type="term" value="F:phosphatidylinositol-3-phosphate binding"/>
    <property type="evidence" value="ECO:0000314"/>
    <property type="project" value="SGD"/>
</dbReference>
<dbReference type="GO" id="GO:0000340">
    <property type="term" value="F:RNA 7-methylguanosine cap binding"/>
    <property type="evidence" value="ECO:0000318"/>
    <property type="project" value="GO_Central"/>
</dbReference>
<dbReference type="GO" id="GO:0003743">
    <property type="term" value="F:translation initiation factor activity"/>
    <property type="evidence" value="ECO:0000250"/>
    <property type="project" value="SGD"/>
</dbReference>
<dbReference type="GO" id="GO:0000184">
    <property type="term" value="P:nuclear-transcribed mRNA catabolic process, nonsense-mediated decay"/>
    <property type="evidence" value="ECO:0000314"/>
    <property type="project" value="SGD"/>
</dbReference>
<dbReference type="GO" id="GO:1901195">
    <property type="term" value="P:positive regulation of formation of translation preinitiation complex"/>
    <property type="evidence" value="ECO:0000314"/>
    <property type="project" value="SGD"/>
</dbReference>
<dbReference type="GO" id="GO:0051726">
    <property type="term" value="P:regulation of cell cycle"/>
    <property type="evidence" value="ECO:0000315"/>
    <property type="project" value="SGD"/>
</dbReference>
<dbReference type="GO" id="GO:0006446">
    <property type="term" value="P:regulation of translational initiation"/>
    <property type="evidence" value="ECO:0000303"/>
    <property type="project" value="ComplexPortal"/>
</dbReference>
<dbReference type="GO" id="GO:0006413">
    <property type="term" value="P:translational initiation"/>
    <property type="evidence" value="ECO:0000250"/>
    <property type="project" value="SGD"/>
</dbReference>
<dbReference type="FunFam" id="3.30.760.10:FF:000011">
    <property type="entry name" value="Eukaryotic translation initiation factor 4E"/>
    <property type="match status" value="1"/>
</dbReference>
<dbReference type="Gene3D" id="3.30.760.10">
    <property type="entry name" value="RNA Cap, Translation Initiation Factor Eif4e"/>
    <property type="match status" value="1"/>
</dbReference>
<dbReference type="InterPro" id="IPR023398">
    <property type="entry name" value="TIF_eIF4e-like"/>
</dbReference>
<dbReference type="InterPro" id="IPR001040">
    <property type="entry name" value="TIF_eIF_4E"/>
</dbReference>
<dbReference type="InterPro" id="IPR019770">
    <property type="entry name" value="TIF_eIF_4E_CS"/>
</dbReference>
<dbReference type="PANTHER" id="PTHR11960">
    <property type="entry name" value="EUKARYOTIC TRANSLATION INITIATION FACTOR 4E RELATED"/>
    <property type="match status" value="1"/>
</dbReference>
<dbReference type="PANTHER" id="PTHR11960:SF8">
    <property type="entry name" value="EUKARYOTIC TRANSLATION INITIATION FACTOR 4E1-RELATED"/>
    <property type="match status" value="1"/>
</dbReference>
<dbReference type="Pfam" id="PF01652">
    <property type="entry name" value="IF4E"/>
    <property type="match status" value="1"/>
</dbReference>
<dbReference type="SUPFAM" id="SSF55418">
    <property type="entry name" value="eIF4e-like"/>
    <property type="match status" value="1"/>
</dbReference>
<dbReference type="PROSITE" id="PS00813">
    <property type="entry name" value="IF4E"/>
    <property type="match status" value="1"/>
</dbReference>
<gene>
    <name type="primary">CDC33</name>
    <name type="synonym">TIF45</name>
    <name type="ordered locus">YOL139C</name>
</gene>